<comment type="function">
    <text evidence="2">Involved in the incorporation of a chlorinated tryptophan residue into halogenated forms of the secondary metabolites called chondramides.</text>
</comment>
<comment type="miscellaneous">
    <text>Chondramides are secondary metabolites with antifungal and cytotoxic activity. They are non-ribosomally produced depsipeptides consisting of a polyketide chain and 3 amino acids (alanine, N-methyltryptophan and beta-tyrosine or alpha-methoxy-beta-tyrosine).</text>
</comment>
<comment type="similarity">
    <text evidence="4">Belongs to the flavin-dependent halogenase family.</text>
</comment>
<sequence length="522" mass="57896">MQLPSSTKILVVGGGPAGSTAATLLAREGFEVTLVEKAIFPRYHIGESLLISVQPIIDLLGAREAVEAHGFQRKKGVLWEWGGERWLFDWKKLRYDYTFHVKREEFDEILLRNAQKNGVKVFEGIDISRLEFDGERPVAAKWSKSSTGESGTIQFEFLLDASGRAGLMATQYLRSRMFMKAFQNVATWGYWKGATIPEVEVEGPITVGSIPYGWIWGIPLRDQTMSVGLVIHQELFKEKRATQSVEEIYHEGLKASPLFQDVVLKGATLEPQIRTETDYSYISRTLAGPGFFLVGDSGAFIDPLLSSGVHLAMHSALLAAASVKSIIAGEVDMASATEFYQRCYQGHFLRWALIVASFYEVNARKETYFWTAQQLAHEELGVFNMSQADMKDVFATMVSGVVDLGDAQNAGRLQKGAERVHQYLDDDGREEDVTALLQKSKQRIFEYLDRVKNRDSRAAMQRYKAGGTETFSMGLDADGAVGGLYVTTEPRLGLLRKVVEERAEAATEAPAPAAPPPAVAEV</sequence>
<gene>
    <name evidence="5" type="primary">cmdE</name>
</gene>
<protein>
    <recommendedName>
        <fullName evidence="3">Tryptophan 2-halogenase</fullName>
        <ecNumber>1.14.14.-</ecNumber>
    </recommendedName>
</protein>
<accession>Q0VZ69</accession>
<feature type="chain" id="PRO_0000407917" description="Tryptophan 2-halogenase">
    <location>
        <begin position="1"/>
        <end position="522"/>
    </location>
</feature>
<feature type="binding site" evidence="1">
    <location>
        <position position="17"/>
    </location>
    <ligand>
        <name>FAD</name>
        <dbReference type="ChEBI" id="CHEBI:57692"/>
    </ligand>
</feature>
<feature type="binding site" evidence="1">
    <location>
        <position position="36"/>
    </location>
    <ligand>
        <name>FAD</name>
        <dbReference type="ChEBI" id="CHEBI:57692"/>
    </ligand>
</feature>
<feature type="binding site" evidence="1">
    <location>
        <position position="42"/>
    </location>
    <ligand>
        <name>FAD</name>
        <dbReference type="ChEBI" id="CHEBI:57692"/>
    </ligand>
</feature>
<feature type="binding site" evidence="1">
    <location>
        <position position="44"/>
    </location>
    <ligand>
        <name>FAD</name>
        <dbReference type="ChEBI" id="CHEBI:57692"/>
    </ligand>
</feature>
<feature type="binding site" evidence="1">
    <location>
        <position position="45"/>
    </location>
    <ligand>
        <name>FAD</name>
        <dbReference type="ChEBI" id="CHEBI:57692"/>
    </ligand>
</feature>
<feature type="binding site" evidence="1">
    <location>
        <position position="48"/>
    </location>
    <ligand>
        <name>FAD</name>
        <dbReference type="ChEBI" id="CHEBI:57692"/>
    </ligand>
</feature>
<feature type="binding site" evidence="1">
    <location>
        <position position="103"/>
    </location>
    <ligand>
        <name>FAD</name>
        <dbReference type="ChEBI" id="CHEBI:57692"/>
    </ligand>
</feature>
<feature type="binding site" evidence="1">
    <location>
        <position position="127"/>
    </location>
    <ligand>
        <name>FAD</name>
        <dbReference type="ChEBI" id="CHEBI:57692"/>
    </ligand>
</feature>
<feature type="binding site" evidence="1">
    <location>
        <position position="296"/>
    </location>
    <ligand>
        <name>FAD</name>
        <dbReference type="ChEBI" id="CHEBI:57692"/>
    </ligand>
</feature>
<feature type="binding site" evidence="1">
    <location>
        <position position="307"/>
    </location>
    <ligand>
        <name>chloride</name>
        <dbReference type="ChEBI" id="CHEBI:17996"/>
    </ligand>
</feature>
<feature type="binding site" evidence="1">
    <location>
        <position position="308"/>
    </location>
    <ligand>
        <name>chloride</name>
        <dbReference type="ChEBI" id="CHEBI:17996"/>
    </ligand>
</feature>
<feature type="binding site" evidence="1">
    <location>
        <position position="309"/>
    </location>
    <ligand>
        <name>FAD</name>
        <dbReference type="ChEBI" id="CHEBI:57692"/>
    </ligand>
</feature>
<proteinExistence type="inferred from homology"/>
<dbReference type="EC" id="1.14.14.-"/>
<dbReference type="EMBL" id="AM179409">
    <property type="protein sequence ID" value="CAJ46693.1"/>
    <property type="molecule type" value="Genomic_DNA"/>
</dbReference>
<dbReference type="RefSeq" id="WP_050432504.1">
    <property type="nucleotide sequence ID" value="NZ_CP012159.1"/>
</dbReference>
<dbReference type="SMR" id="Q0VZ69"/>
<dbReference type="STRING" id="52.CMC5_047500"/>
<dbReference type="OrthoDB" id="9799983at2"/>
<dbReference type="GO" id="GO:0004497">
    <property type="term" value="F:monooxygenase activity"/>
    <property type="evidence" value="ECO:0000315"/>
    <property type="project" value="UniProtKB"/>
</dbReference>
<dbReference type="GO" id="GO:0000166">
    <property type="term" value="F:nucleotide binding"/>
    <property type="evidence" value="ECO:0007669"/>
    <property type="project" value="UniProtKB-KW"/>
</dbReference>
<dbReference type="GO" id="GO:0009403">
    <property type="term" value="P:toxin biosynthetic process"/>
    <property type="evidence" value="ECO:0000315"/>
    <property type="project" value="UniProtKB"/>
</dbReference>
<dbReference type="Gene3D" id="3.30.9.100">
    <property type="match status" value="1"/>
</dbReference>
<dbReference type="Gene3D" id="3.50.50.60">
    <property type="entry name" value="FAD/NAD(P)-binding domain"/>
    <property type="match status" value="1"/>
</dbReference>
<dbReference type="InterPro" id="IPR036188">
    <property type="entry name" value="FAD/NAD-bd_sf"/>
</dbReference>
<dbReference type="InterPro" id="IPR050816">
    <property type="entry name" value="Flavin-dep_Halogenase_NPB"/>
</dbReference>
<dbReference type="InterPro" id="IPR006905">
    <property type="entry name" value="Flavin_halogenase"/>
</dbReference>
<dbReference type="PANTHER" id="PTHR43747:SF5">
    <property type="entry name" value="FAD-BINDING DOMAIN-CONTAINING PROTEIN"/>
    <property type="match status" value="1"/>
</dbReference>
<dbReference type="PANTHER" id="PTHR43747">
    <property type="entry name" value="FAD-BINDING PROTEIN"/>
    <property type="match status" value="1"/>
</dbReference>
<dbReference type="Pfam" id="PF04820">
    <property type="entry name" value="Trp_halogenase"/>
    <property type="match status" value="2"/>
</dbReference>
<dbReference type="PRINTS" id="PR00420">
    <property type="entry name" value="RNGMNOXGNASE"/>
</dbReference>
<dbReference type="SUPFAM" id="SSF51905">
    <property type="entry name" value="FAD/NAD(P)-binding domain"/>
    <property type="match status" value="1"/>
</dbReference>
<name>THAL_CHOCO</name>
<reference evidence="4 5" key="1">
    <citation type="journal article" date="2006" name="Chem. Biol.">
        <title>Molecular and biochemical studies of chondramide formation-highly cytotoxic natural products from Chondromyces crocatus Cm c5.</title>
        <authorList>
            <person name="Rachid S."/>
            <person name="Krug D."/>
            <person name="Kunze B."/>
            <person name="Kochems I."/>
            <person name="Scharfe M."/>
            <person name="Zabriskie T.M."/>
            <person name="Blocker H."/>
            <person name="Muller R."/>
        </authorList>
    </citation>
    <scope>NUCLEOTIDE SEQUENCE [GENOMIC DNA]</scope>
    <scope>FUNCTION</scope>
    <source>
        <strain evidence="2">DSM 14714 / JCM 12616 / Cm c5</strain>
    </source>
</reference>
<organism>
    <name type="scientific">Chondromyces crocatus</name>
    <dbReference type="NCBI Taxonomy" id="52"/>
    <lineage>
        <taxon>Bacteria</taxon>
        <taxon>Pseudomonadati</taxon>
        <taxon>Myxococcota</taxon>
        <taxon>Polyangia</taxon>
        <taxon>Polyangiales</taxon>
        <taxon>Polyangiaceae</taxon>
        <taxon>Chondromyces</taxon>
    </lineage>
</organism>
<evidence type="ECO:0000250" key="1">
    <source>
        <dbReference type="UniProtKB" id="Q4KCZ0"/>
    </source>
</evidence>
<evidence type="ECO:0000269" key="2">
    <source>
    </source>
</evidence>
<evidence type="ECO:0000303" key="3">
    <source>
    </source>
</evidence>
<evidence type="ECO:0000305" key="4"/>
<evidence type="ECO:0000312" key="5">
    <source>
        <dbReference type="EMBL" id="CAJ46693.1"/>
    </source>
</evidence>
<keyword id="KW-0868">Chloride</keyword>
<keyword id="KW-0274">FAD</keyword>
<keyword id="KW-0285">Flavoprotein</keyword>
<keyword id="KW-0503">Monooxygenase</keyword>
<keyword id="KW-0547">Nucleotide-binding</keyword>
<keyword id="KW-0560">Oxidoreductase</keyword>